<organism>
    <name type="scientific">Mus musculus</name>
    <name type="common">Mouse</name>
    <dbReference type="NCBI Taxonomy" id="10090"/>
    <lineage>
        <taxon>Eukaryota</taxon>
        <taxon>Metazoa</taxon>
        <taxon>Chordata</taxon>
        <taxon>Craniata</taxon>
        <taxon>Vertebrata</taxon>
        <taxon>Euteleostomi</taxon>
        <taxon>Mammalia</taxon>
        <taxon>Eutheria</taxon>
        <taxon>Euarchontoglires</taxon>
        <taxon>Glires</taxon>
        <taxon>Rodentia</taxon>
        <taxon>Myomorpha</taxon>
        <taxon>Muroidea</taxon>
        <taxon>Muridae</taxon>
        <taxon>Murinae</taxon>
        <taxon>Mus</taxon>
        <taxon>Mus</taxon>
    </lineage>
</organism>
<reference key="1">
    <citation type="journal article" date="2004" name="Genome Res.">
        <title>The status, quality, and expansion of the NIH full-length cDNA project: the Mammalian Gene Collection (MGC).</title>
        <authorList>
            <consortium name="The MGC Project Team"/>
        </authorList>
    </citation>
    <scope>NUCLEOTIDE SEQUENCE [LARGE SCALE MRNA]</scope>
    <source>
        <strain>FVB/N</strain>
        <tissue>Kidney</tissue>
        <tissue>Liver</tissue>
    </source>
</reference>
<reference key="2">
    <citation type="journal article" date="2010" name="Cell">
        <title>A tissue-specific atlas of mouse protein phosphorylation and expression.</title>
        <authorList>
            <person name="Huttlin E.L."/>
            <person name="Jedrychowski M.P."/>
            <person name="Elias J.E."/>
            <person name="Goswami T."/>
            <person name="Rad R."/>
            <person name="Beausoleil S.A."/>
            <person name="Villen J."/>
            <person name="Haas W."/>
            <person name="Sowa M.E."/>
            <person name="Gygi S.P."/>
        </authorList>
    </citation>
    <scope>IDENTIFICATION BY MASS SPECTROMETRY [LARGE SCALE ANALYSIS]</scope>
    <source>
        <tissue>Kidney</tissue>
        <tissue>Liver</tissue>
    </source>
</reference>
<dbReference type="EC" id="3.5.1.6"/>
<dbReference type="EMBL" id="BC021388">
    <property type="protein sequence ID" value="AAH21388.1"/>
    <property type="molecule type" value="mRNA"/>
</dbReference>
<dbReference type="EMBL" id="BC024447">
    <property type="protein sequence ID" value="AAH24447.1"/>
    <property type="molecule type" value="mRNA"/>
</dbReference>
<dbReference type="CCDS" id="CCDS23925.1"/>
<dbReference type="RefSeq" id="NP_598756.1">
    <property type="nucleotide sequence ID" value="NM_133995.4"/>
</dbReference>
<dbReference type="SMR" id="Q8VC97"/>
<dbReference type="FunCoup" id="Q8VC97">
    <property type="interactions" value="551"/>
</dbReference>
<dbReference type="STRING" id="10090.ENSMUSP00000049342"/>
<dbReference type="iPTMnet" id="Q8VC97"/>
<dbReference type="PhosphoSitePlus" id="Q8VC97"/>
<dbReference type="SwissPalm" id="Q8VC97"/>
<dbReference type="jPOST" id="Q8VC97"/>
<dbReference type="PaxDb" id="10090-ENSMUSP00000049342"/>
<dbReference type="ProteomicsDB" id="273718"/>
<dbReference type="Antibodypedia" id="252">
    <property type="antibodies" value="97 antibodies from 24 providers"/>
</dbReference>
<dbReference type="DNASU" id="103149"/>
<dbReference type="Ensembl" id="ENSMUST00000039925.8">
    <property type="protein sequence ID" value="ENSMUSP00000049342.8"/>
    <property type="gene ID" value="ENSMUSG00000033427.15"/>
</dbReference>
<dbReference type="GeneID" id="103149"/>
<dbReference type="KEGG" id="mmu:103149"/>
<dbReference type="UCSC" id="uc007fqj.2">
    <property type="organism name" value="mouse"/>
</dbReference>
<dbReference type="AGR" id="MGI:2143535"/>
<dbReference type="CTD" id="51733"/>
<dbReference type="MGI" id="MGI:2143535">
    <property type="gene designation" value="Upb1"/>
</dbReference>
<dbReference type="VEuPathDB" id="HostDB:ENSMUSG00000033427"/>
<dbReference type="eggNOG" id="KOG0808">
    <property type="taxonomic scope" value="Eukaryota"/>
</dbReference>
<dbReference type="GeneTree" id="ENSGT00390000004906"/>
<dbReference type="HOGENOM" id="CLU_030130_4_1_1"/>
<dbReference type="InParanoid" id="Q8VC97"/>
<dbReference type="OMA" id="HWPFLRD"/>
<dbReference type="OrthoDB" id="412018at2759"/>
<dbReference type="PhylomeDB" id="Q8VC97"/>
<dbReference type="TreeFam" id="TF313402"/>
<dbReference type="Reactome" id="R-MMU-73621">
    <property type="pathway name" value="Pyrimidine catabolism"/>
</dbReference>
<dbReference type="UniPathway" id="UPA00131"/>
<dbReference type="BioGRID-ORCS" id="103149">
    <property type="hits" value="2 hits in 77 CRISPR screens"/>
</dbReference>
<dbReference type="ChiTaRS" id="Upb1">
    <property type="organism name" value="mouse"/>
</dbReference>
<dbReference type="PRO" id="PR:Q8VC97"/>
<dbReference type="Proteomes" id="UP000000589">
    <property type="component" value="Chromosome 10"/>
</dbReference>
<dbReference type="RNAct" id="Q8VC97">
    <property type="molecule type" value="protein"/>
</dbReference>
<dbReference type="Bgee" id="ENSMUSG00000033427">
    <property type="expression patterns" value="Expressed in left lobe of liver and 74 other cell types or tissues"/>
</dbReference>
<dbReference type="ExpressionAtlas" id="Q8VC97">
    <property type="expression patterns" value="baseline and differential"/>
</dbReference>
<dbReference type="GO" id="GO:0005829">
    <property type="term" value="C:cytosol"/>
    <property type="evidence" value="ECO:0000314"/>
    <property type="project" value="MGI"/>
</dbReference>
<dbReference type="GO" id="GO:0003837">
    <property type="term" value="F:beta-ureidopropionase activity"/>
    <property type="evidence" value="ECO:0000314"/>
    <property type="project" value="MGI"/>
</dbReference>
<dbReference type="GO" id="GO:0042803">
    <property type="term" value="F:protein homodimerization activity"/>
    <property type="evidence" value="ECO:0007669"/>
    <property type="project" value="Ensembl"/>
</dbReference>
<dbReference type="GO" id="GO:0008270">
    <property type="term" value="F:zinc ion binding"/>
    <property type="evidence" value="ECO:0007669"/>
    <property type="project" value="Ensembl"/>
</dbReference>
<dbReference type="GO" id="GO:0033396">
    <property type="term" value="P:beta-alanine biosynthetic process via 3-ureidopropionate"/>
    <property type="evidence" value="ECO:0000250"/>
    <property type="project" value="UniProtKB"/>
</dbReference>
<dbReference type="GO" id="GO:0006248">
    <property type="term" value="P:CMP catabolic process"/>
    <property type="evidence" value="ECO:0000314"/>
    <property type="project" value="MGI"/>
</dbReference>
<dbReference type="GO" id="GO:0006249">
    <property type="term" value="P:dCMP catabolic process"/>
    <property type="evidence" value="ECO:0000314"/>
    <property type="project" value="MGI"/>
</dbReference>
<dbReference type="GO" id="GO:0046074">
    <property type="term" value="P:dTMP catabolic process"/>
    <property type="evidence" value="ECO:0000266"/>
    <property type="project" value="MGI"/>
</dbReference>
<dbReference type="GO" id="GO:0046079">
    <property type="term" value="P:dUMP catabolic process"/>
    <property type="evidence" value="ECO:0000314"/>
    <property type="project" value="MGI"/>
</dbReference>
<dbReference type="GO" id="GO:0001701">
    <property type="term" value="P:in utero embryonic development"/>
    <property type="evidence" value="ECO:0007669"/>
    <property type="project" value="Ensembl"/>
</dbReference>
<dbReference type="GO" id="GO:0001889">
    <property type="term" value="P:liver development"/>
    <property type="evidence" value="ECO:0007669"/>
    <property type="project" value="Ensembl"/>
</dbReference>
<dbReference type="GO" id="GO:0051260">
    <property type="term" value="P:protein homooligomerization"/>
    <property type="evidence" value="ECO:0000250"/>
    <property type="project" value="UniProtKB"/>
</dbReference>
<dbReference type="GO" id="GO:0051289">
    <property type="term" value="P:protein homotetramerization"/>
    <property type="evidence" value="ECO:0007669"/>
    <property type="project" value="Ensembl"/>
</dbReference>
<dbReference type="GO" id="GO:0046135">
    <property type="term" value="P:pyrimidine nucleoside catabolic process"/>
    <property type="evidence" value="ECO:0000250"/>
    <property type="project" value="UniProtKB"/>
</dbReference>
<dbReference type="GO" id="GO:0046050">
    <property type="term" value="P:UMP catabolic process"/>
    <property type="evidence" value="ECO:0000314"/>
    <property type="project" value="MGI"/>
</dbReference>
<dbReference type="CDD" id="cd07587">
    <property type="entry name" value="ML_beta-AS"/>
    <property type="match status" value="1"/>
</dbReference>
<dbReference type="FunFam" id="3.60.110.10:FF:000009">
    <property type="entry name" value="Beta-ureidopropionase 1"/>
    <property type="match status" value="1"/>
</dbReference>
<dbReference type="Gene3D" id="3.60.110.10">
    <property type="entry name" value="Carbon-nitrogen hydrolase"/>
    <property type="match status" value="1"/>
</dbReference>
<dbReference type="InterPro" id="IPR050345">
    <property type="entry name" value="Aliph_Amidase/BUP"/>
</dbReference>
<dbReference type="InterPro" id="IPR003010">
    <property type="entry name" value="C-N_Hydrolase"/>
</dbReference>
<dbReference type="InterPro" id="IPR036526">
    <property type="entry name" value="C-N_Hydrolase_sf"/>
</dbReference>
<dbReference type="PANTHER" id="PTHR43674:SF2">
    <property type="entry name" value="BETA-UREIDOPROPIONASE"/>
    <property type="match status" value="1"/>
</dbReference>
<dbReference type="PANTHER" id="PTHR43674">
    <property type="entry name" value="NITRILASE C965.09-RELATED"/>
    <property type="match status" value="1"/>
</dbReference>
<dbReference type="Pfam" id="PF00795">
    <property type="entry name" value="CN_hydrolase"/>
    <property type="match status" value="1"/>
</dbReference>
<dbReference type="SUPFAM" id="SSF56317">
    <property type="entry name" value="Carbon-nitrogen hydrolase"/>
    <property type="match status" value="1"/>
</dbReference>
<dbReference type="PROSITE" id="PS50263">
    <property type="entry name" value="CN_HYDROLASE"/>
    <property type="match status" value="1"/>
</dbReference>
<keyword id="KW-0021">Allosteric enzyme</keyword>
<keyword id="KW-0963">Cytoplasm</keyword>
<keyword id="KW-0378">Hydrolase</keyword>
<keyword id="KW-0597">Phosphoprotein</keyword>
<keyword id="KW-1185">Reference proteome</keyword>
<accession>Q8VC97</accession>
<accession>Q8R1K8</accession>
<gene>
    <name type="primary">Upb1</name>
</gene>
<sequence length="393" mass="43937">MAGPEWQSLEQCLEKHLPPDDLAQVKRILYGKQTRNLDLPREALKAASERNFELKGYAFGAAKEQQRCPQIVRVGLVQNRIPLPTSAPVAEQVSALHKSIEEIAEVAAMCGVNIICFQEAWNMPFAFCTREKLPWTEFAESAEDGLTTRFCQKLAKKHNMVVVSPILERDREHGGVLWNTAVVISNSGLVMGKTRKNHIPRVGDFNESTYYMEGNLGHPVFQTQFGRIAVNICYGRHHPLNWLMYSINGAEIIFNPSATIGELSESLWPIEARNAAIANHCFTCALNRVGQEHFPNEFTSGDGKKAHHDLGYFYGSSYVAAPDGSRTPGLSRNQDGLLVTELNLNLCQQINDFWTFKMTGRLEMYARELAEAVKPNYSPNIVKEDLVLAPSSG</sequence>
<feature type="chain" id="PRO_0000204052" description="Beta-ureidopropionase">
    <location>
        <begin position="1"/>
        <end position="393"/>
    </location>
</feature>
<feature type="domain" description="CN hydrolase" evidence="4">
    <location>
        <begin position="72"/>
        <end position="344"/>
    </location>
</feature>
<feature type="active site" description="Proton acceptor" evidence="4">
    <location>
        <position position="119"/>
    </location>
</feature>
<feature type="active site" description="Proton donor" evidence="4">
    <location>
        <position position="196"/>
    </location>
</feature>
<feature type="active site" description="Nucleophile" evidence="4">
    <location>
        <position position="233"/>
    </location>
</feature>
<feature type="modified residue" description="Phosphoserine" evidence="2">
    <location>
        <position position="378"/>
    </location>
</feature>
<proteinExistence type="evidence at protein level"/>
<name>BUP1_MOUSE</name>
<comment type="function">
    <text evidence="3">Catalyzes a late step in pyrimidine degradation. Converts N-carbamoyl-beta-alanine (3-ureidopropanoate) into beta-alanine, ammonia and carbon dioxide. Likewise, converts N-carbamoyl-beta-aminoisobutyrate (3-ureidoisobutyrate) into beta-aminoisobutyrate, ammonia and carbon dioxide.</text>
</comment>
<comment type="catalytic activity">
    <reaction evidence="3">
        <text>3-(carbamoylamino)propanoate + H2O + 2 H(+) = beta-alanine + NH4(+) + CO2</text>
        <dbReference type="Rhea" id="RHEA:11184"/>
        <dbReference type="ChEBI" id="CHEBI:11892"/>
        <dbReference type="ChEBI" id="CHEBI:15377"/>
        <dbReference type="ChEBI" id="CHEBI:15378"/>
        <dbReference type="ChEBI" id="CHEBI:16526"/>
        <dbReference type="ChEBI" id="CHEBI:28938"/>
        <dbReference type="ChEBI" id="CHEBI:57966"/>
        <dbReference type="EC" id="3.5.1.6"/>
    </reaction>
</comment>
<comment type="catalytic activity">
    <reaction evidence="3">
        <text>3-(carbamoylamino)-2-methylpropanoate + H2O + 2 H(+) = (R)-3-amino-2-methylpropanoate + NH4(+) + CO2</text>
        <dbReference type="Rhea" id="RHEA:37339"/>
        <dbReference type="ChEBI" id="CHEBI:15377"/>
        <dbReference type="ChEBI" id="CHEBI:15378"/>
        <dbReference type="ChEBI" id="CHEBI:16526"/>
        <dbReference type="ChEBI" id="CHEBI:28938"/>
        <dbReference type="ChEBI" id="CHEBI:57731"/>
        <dbReference type="ChEBI" id="CHEBI:74414"/>
        <dbReference type="EC" id="3.5.1.6"/>
    </reaction>
</comment>
<comment type="pathway">
    <text evidence="3">Amino-acid biosynthesis; beta-alanine biosynthesis.</text>
</comment>
<comment type="subunit">
    <text evidence="3">Homodimer, homotetramer, homooctamer; can also form higher homooligomers.</text>
</comment>
<comment type="subcellular location">
    <subcellularLocation>
        <location evidence="1">Cytoplasm</location>
    </subcellularLocation>
</comment>
<comment type="similarity">
    <text evidence="5">Belongs to the carbon-nitrogen hydrolase superfamily. BUP family.</text>
</comment>
<protein>
    <recommendedName>
        <fullName>Beta-ureidopropionase</fullName>
        <ecNumber>3.5.1.6</ecNumber>
    </recommendedName>
    <alternativeName>
        <fullName>Beta-alanine synthase</fullName>
    </alternativeName>
    <alternativeName>
        <fullName>N-carbamoyl-beta-alanine amidohydrolase</fullName>
    </alternativeName>
</protein>
<evidence type="ECO:0000250" key="1"/>
<evidence type="ECO:0000250" key="2">
    <source>
        <dbReference type="UniProtKB" id="Q03248"/>
    </source>
</evidence>
<evidence type="ECO:0000250" key="3">
    <source>
        <dbReference type="UniProtKB" id="Q9UBR1"/>
    </source>
</evidence>
<evidence type="ECO:0000255" key="4">
    <source>
        <dbReference type="PROSITE-ProRule" id="PRU00054"/>
    </source>
</evidence>
<evidence type="ECO:0000305" key="5"/>